<sequence>MSNSYLAFPKFDPVIFSIGPVSLHWYGLMYLVGFVFAMWLAVRRANKPGSGWTKEEVENLLYAGFLGVFIGGRVGYVLFYNLPMFLDNPLYLFKVWDGGMSFHGGLIGVICVMLWFARRTKRNFFQVADFIAPLIPFGLGAGRLGNFINAELWGRVTTDTPWAMLFPTSRNTDIAIVAADPAKWQAIFNQYGVLPRHPSQLYEMILEGVVLFIILNVFIRKPRPMGSVSGLFLIGYGTFRIIVECFRQPDEQLGLFEGMISMGQILSVPMILAGIIMMIWAYRRPTQKLS</sequence>
<evidence type="ECO:0000255" key="1">
    <source>
        <dbReference type="HAMAP-Rule" id="MF_01147"/>
    </source>
</evidence>
<organism>
    <name type="scientific">Yersinia pestis</name>
    <dbReference type="NCBI Taxonomy" id="632"/>
    <lineage>
        <taxon>Bacteria</taxon>
        <taxon>Pseudomonadati</taxon>
        <taxon>Pseudomonadota</taxon>
        <taxon>Gammaproteobacteria</taxon>
        <taxon>Enterobacterales</taxon>
        <taxon>Yersiniaceae</taxon>
        <taxon>Yersinia</taxon>
    </lineage>
</organism>
<protein>
    <recommendedName>
        <fullName evidence="1">Phosphatidylglycerol--prolipoprotein diacylglyceryl transferase</fullName>
        <ecNumber evidence="1">2.5.1.145</ecNumber>
    </recommendedName>
</protein>
<gene>
    <name evidence="1" type="primary">lgt</name>
    <name type="ordered locus">YPO0784</name>
    <name type="ordered locus">y3172</name>
    <name type="ordered locus">YP_2874</name>
</gene>
<keyword id="KW-0997">Cell inner membrane</keyword>
<keyword id="KW-1003">Cell membrane</keyword>
<keyword id="KW-0472">Membrane</keyword>
<keyword id="KW-1185">Reference proteome</keyword>
<keyword id="KW-0808">Transferase</keyword>
<keyword id="KW-0812">Transmembrane</keyword>
<keyword id="KW-1133">Transmembrane helix</keyword>
<comment type="function">
    <text evidence="1">Catalyzes the transfer of the diacylglyceryl group from phosphatidylglycerol to the sulfhydryl group of the N-terminal cysteine of a prolipoprotein, the first step in the formation of mature lipoproteins.</text>
</comment>
<comment type="catalytic activity">
    <reaction evidence="1">
        <text>L-cysteinyl-[prolipoprotein] + a 1,2-diacyl-sn-glycero-3-phospho-(1'-sn-glycerol) = an S-1,2-diacyl-sn-glyceryl-L-cysteinyl-[prolipoprotein] + sn-glycerol 1-phosphate + H(+)</text>
        <dbReference type="Rhea" id="RHEA:56712"/>
        <dbReference type="Rhea" id="RHEA-COMP:14679"/>
        <dbReference type="Rhea" id="RHEA-COMP:14680"/>
        <dbReference type="ChEBI" id="CHEBI:15378"/>
        <dbReference type="ChEBI" id="CHEBI:29950"/>
        <dbReference type="ChEBI" id="CHEBI:57685"/>
        <dbReference type="ChEBI" id="CHEBI:64716"/>
        <dbReference type="ChEBI" id="CHEBI:140658"/>
        <dbReference type="EC" id="2.5.1.145"/>
    </reaction>
</comment>
<comment type="pathway">
    <text evidence="1">Protein modification; lipoprotein biosynthesis (diacylglyceryl transfer).</text>
</comment>
<comment type="subcellular location">
    <subcellularLocation>
        <location evidence="1">Cell inner membrane</location>
        <topology evidence="1">Multi-pass membrane protein</topology>
    </subcellularLocation>
</comment>
<comment type="similarity">
    <text evidence="1">Belongs to the Lgt family.</text>
</comment>
<feature type="chain" id="PRO_0000172722" description="Phosphatidylglycerol--prolipoprotein diacylglyceryl transferase">
    <location>
        <begin position="1"/>
        <end position="290"/>
    </location>
</feature>
<feature type="transmembrane region" description="Helical" evidence="1">
    <location>
        <begin position="21"/>
        <end position="41"/>
    </location>
</feature>
<feature type="transmembrane region" description="Helical" evidence="1">
    <location>
        <begin position="60"/>
        <end position="80"/>
    </location>
</feature>
<feature type="transmembrane region" description="Helical" evidence="1">
    <location>
        <begin position="96"/>
        <end position="116"/>
    </location>
</feature>
<feature type="transmembrane region" description="Helical" evidence="1">
    <location>
        <begin position="124"/>
        <end position="144"/>
    </location>
</feature>
<feature type="transmembrane region" description="Helical" evidence="1">
    <location>
        <begin position="199"/>
        <end position="219"/>
    </location>
</feature>
<feature type="transmembrane region" description="Helical" evidence="1">
    <location>
        <begin position="226"/>
        <end position="246"/>
    </location>
</feature>
<feature type="transmembrane region" description="Helical" evidence="1">
    <location>
        <begin position="260"/>
        <end position="280"/>
    </location>
</feature>
<feature type="binding site" evidence="1">
    <location>
        <position position="143"/>
    </location>
    <ligand>
        <name>a 1,2-diacyl-sn-glycero-3-phospho-(1'-sn-glycerol)</name>
        <dbReference type="ChEBI" id="CHEBI:64716"/>
    </ligand>
</feature>
<proteinExistence type="inferred from homology"/>
<accession>Q8ZHV0</accession>
<accession>Q0WIP9</accession>
<dbReference type="EC" id="2.5.1.145" evidence="1"/>
<dbReference type="EMBL" id="AL590842">
    <property type="protein sequence ID" value="CAL19456.1"/>
    <property type="molecule type" value="Genomic_DNA"/>
</dbReference>
<dbReference type="EMBL" id="AE009952">
    <property type="protein sequence ID" value="AAM86722.1"/>
    <property type="molecule type" value="Genomic_DNA"/>
</dbReference>
<dbReference type="EMBL" id="AE017042">
    <property type="protein sequence ID" value="AAS63056.1"/>
    <property type="molecule type" value="Genomic_DNA"/>
</dbReference>
<dbReference type="PIR" id="AF0096">
    <property type="entry name" value="AF0096"/>
</dbReference>
<dbReference type="RefSeq" id="WP_002211383.1">
    <property type="nucleotide sequence ID" value="NZ_WUCM01000007.1"/>
</dbReference>
<dbReference type="RefSeq" id="YP_002345839.1">
    <property type="nucleotide sequence ID" value="NC_003143.1"/>
</dbReference>
<dbReference type="SMR" id="Q8ZHV0"/>
<dbReference type="STRING" id="214092.YPO0784"/>
<dbReference type="PaxDb" id="214092-YPO0784"/>
<dbReference type="DNASU" id="1148119"/>
<dbReference type="EnsemblBacteria" id="AAS63056">
    <property type="protein sequence ID" value="AAS63056"/>
    <property type="gene ID" value="YP_2874"/>
</dbReference>
<dbReference type="GeneID" id="57973850"/>
<dbReference type="KEGG" id="ype:YPO0784"/>
<dbReference type="KEGG" id="ypk:y3172"/>
<dbReference type="KEGG" id="ypm:YP_2874"/>
<dbReference type="PATRIC" id="fig|214092.21.peg.1047"/>
<dbReference type="eggNOG" id="COG0682">
    <property type="taxonomic scope" value="Bacteria"/>
</dbReference>
<dbReference type="HOGENOM" id="CLU_013386_1_0_6"/>
<dbReference type="OMA" id="SIRWYGL"/>
<dbReference type="OrthoDB" id="871140at2"/>
<dbReference type="UniPathway" id="UPA00664"/>
<dbReference type="Proteomes" id="UP000000815">
    <property type="component" value="Chromosome"/>
</dbReference>
<dbReference type="Proteomes" id="UP000001019">
    <property type="component" value="Chromosome"/>
</dbReference>
<dbReference type="Proteomes" id="UP000002490">
    <property type="component" value="Chromosome"/>
</dbReference>
<dbReference type="GO" id="GO:0005886">
    <property type="term" value="C:plasma membrane"/>
    <property type="evidence" value="ECO:0000318"/>
    <property type="project" value="GO_Central"/>
</dbReference>
<dbReference type="GO" id="GO:0008961">
    <property type="term" value="F:phosphatidylglycerol-prolipoprotein diacylglyceryl transferase activity"/>
    <property type="evidence" value="ECO:0000318"/>
    <property type="project" value="GO_Central"/>
</dbReference>
<dbReference type="GO" id="GO:0042158">
    <property type="term" value="P:lipoprotein biosynthetic process"/>
    <property type="evidence" value="ECO:0000318"/>
    <property type="project" value="GO_Central"/>
</dbReference>
<dbReference type="HAMAP" id="MF_01147">
    <property type="entry name" value="Lgt"/>
    <property type="match status" value="1"/>
</dbReference>
<dbReference type="InterPro" id="IPR001640">
    <property type="entry name" value="Lgt"/>
</dbReference>
<dbReference type="NCBIfam" id="TIGR00544">
    <property type="entry name" value="lgt"/>
    <property type="match status" value="1"/>
</dbReference>
<dbReference type="PANTHER" id="PTHR30589:SF0">
    <property type="entry name" value="PHOSPHATIDYLGLYCEROL--PROLIPOPROTEIN DIACYLGLYCERYL TRANSFERASE"/>
    <property type="match status" value="1"/>
</dbReference>
<dbReference type="PANTHER" id="PTHR30589">
    <property type="entry name" value="PROLIPOPROTEIN DIACYLGLYCERYL TRANSFERASE"/>
    <property type="match status" value="1"/>
</dbReference>
<dbReference type="Pfam" id="PF01790">
    <property type="entry name" value="LGT"/>
    <property type="match status" value="1"/>
</dbReference>
<dbReference type="PROSITE" id="PS01311">
    <property type="entry name" value="LGT"/>
    <property type="match status" value="1"/>
</dbReference>
<reference key="1">
    <citation type="journal article" date="2001" name="Nature">
        <title>Genome sequence of Yersinia pestis, the causative agent of plague.</title>
        <authorList>
            <person name="Parkhill J."/>
            <person name="Wren B.W."/>
            <person name="Thomson N.R."/>
            <person name="Titball R.W."/>
            <person name="Holden M.T.G."/>
            <person name="Prentice M.B."/>
            <person name="Sebaihia M."/>
            <person name="James K.D."/>
            <person name="Churcher C.M."/>
            <person name="Mungall K.L."/>
            <person name="Baker S."/>
            <person name="Basham D."/>
            <person name="Bentley S.D."/>
            <person name="Brooks K."/>
            <person name="Cerdeno-Tarraga A.-M."/>
            <person name="Chillingworth T."/>
            <person name="Cronin A."/>
            <person name="Davies R.M."/>
            <person name="Davis P."/>
            <person name="Dougan G."/>
            <person name="Feltwell T."/>
            <person name="Hamlin N."/>
            <person name="Holroyd S."/>
            <person name="Jagels K."/>
            <person name="Karlyshev A.V."/>
            <person name="Leather S."/>
            <person name="Moule S."/>
            <person name="Oyston P.C.F."/>
            <person name="Quail M.A."/>
            <person name="Rutherford K.M."/>
            <person name="Simmonds M."/>
            <person name="Skelton J."/>
            <person name="Stevens K."/>
            <person name="Whitehead S."/>
            <person name="Barrell B.G."/>
        </authorList>
    </citation>
    <scope>NUCLEOTIDE SEQUENCE [LARGE SCALE GENOMIC DNA]</scope>
    <source>
        <strain>CO-92 / Biovar Orientalis</strain>
    </source>
</reference>
<reference key="2">
    <citation type="journal article" date="2002" name="J. Bacteriol.">
        <title>Genome sequence of Yersinia pestis KIM.</title>
        <authorList>
            <person name="Deng W."/>
            <person name="Burland V."/>
            <person name="Plunkett G. III"/>
            <person name="Boutin A."/>
            <person name="Mayhew G.F."/>
            <person name="Liss P."/>
            <person name="Perna N.T."/>
            <person name="Rose D.J."/>
            <person name="Mau B."/>
            <person name="Zhou S."/>
            <person name="Schwartz D.C."/>
            <person name="Fetherston J.D."/>
            <person name="Lindler L.E."/>
            <person name="Brubaker R.R."/>
            <person name="Plano G.V."/>
            <person name="Straley S.C."/>
            <person name="McDonough K.A."/>
            <person name="Nilles M.L."/>
            <person name="Matson J.S."/>
            <person name="Blattner F.R."/>
            <person name="Perry R.D."/>
        </authorList>
    </citation>
    <scope>NUCLEOTIDE SEQUENCE [LARGE SCALE GENOMIC DNA]</scope>
    <source>
        <strain>KIM10+ / Biovar Mediaevalis</strain>
    </source>
</reference>
<reference key="3">
    <citation type="journal article" date="2004" name="DNA Res.">
        <title>Complete genome sequence of Yersinia pestis strain 91001, an isolate avirulent to humans.</title>
        <authorList>
            <person name="Song Y."/>
            <person name="Tong Z."/>
            <person name="Wang J."/>
            <person name="Wang L."/>
            <person name="Guo Z."/>
            <person name="Han Y."/>
            <person name="Zhang J."/>
            <person name="Pei D."/>
            <person name="Zhou D."/>
            <person name="Qin H."/>
            <person name="Pang X."/>
            <person name="Han Y."/>
            <person name="Zhai J."/>
            <person name="Li M."/>
            <person name="Cui B."/>
            <person name="Qi Z."/>
            <person name="Jin L."/>
            <person name="Dai R."/>
            <person name="Chen F."/>
            <person name="Li S."/>
            <person name="Ye C."/>
            <person name="Du Z."/>
            <person name="Lin W."/>
            <person name="Wang J."/>
            <person name="Yu J."/>
            <person name="Yang H."/>
            <person name="Wang J."/>
            <person name="Huang P."/>
            <person name="Yang R."/>
        </authorList>
    </citation>
    <scope>NUCLEOTIDE SEQUENCE [LARGE SCALE GENOMIC DNA]</scope>
    <source>
        <strain>91001 / Biovar Mediaevalis</strain>
    </source>
</reference>
<name>LGT_YERPE</name>